<evidence type="ECO:0000255" key="1">
    <source>
        <dbReference type="HAMAP-Rule" id="MF_02071"/>
    </source>
</evidence>
<comment type="function">
    <text evidence="1">Lytic transglycosylase with a strong preference for naked glycan strands that lack stem peptides.</text>
</comment>
<comment type="similarity">
    <text evidence="1">Belongs to the RlpA family.</text>
</comment>
<reference key="1">
    <citation type="journal article" date="2000" name="Nature">
        <title>Complete DNA sequence of a serogroup A strain of Neisseria meningitidis Z2491.</title>
        <authorList>
            <person name="Parkhill J."/>
            <person name="Achtman M."/>
            <person name="James K.D."/>
            <person name="Bentley S.D."/>
            <person name="Churcher C.M."/>
            <person name="Klee S.R."/>
            <person name="Morelli G."/>
            <person name="Basham D."/>
            <person name="Brown D."/>
            <person name="Chillingworth T."/>
            <person name="Davies R.M."/>
            <person name="Davis P."/>
            <person name="Devlin K."/>
            <person name="Feltwell T."/>
            <person name="Hamlin N."/>
            <person name="Holroyd S."/>
            <person name="Jagels K."/>
            <person name="Leather S."/>
            <person name="Moule S."/>
            <person name="Mungall K.L."/>
            <person name="Quail M.A."/>
            <person name="Rajandream M.A."/>
            <person name="Rutherford K.M."/>
            <person name="Simmonds M."/>
            <person name="Skelton J."/>
            <person name="Whitehead S."/>
            <person name="Spratt B.G."/>
            <person name="Barrell B.G."/>
        </authorList>
    </citation>
    <scope>NUCLEOTIDE SEQUENCE [LARGE SCALE GENOMIC DNA]</scope>
    <source>
        <strain>DSM 15465 / Z2491</strain>
    </source>
</reference>
<sequence length="239" mass="26029">MTLTRKTLFLLTAAFGIHSFQTASADAVVRAEKLHASANRSYKVAGKRYTPKNQVAEFTQTGNASWYGGRFHGRKTSGGERYDMNAFTAAHKTLPIPSYVRVTNTKNGKSVIVRVNDRGPFHGNRIIDVSKAAAQKLGFVNQGTAHVKIEQIVPGQSAPVAENKDIFIDLKSFGTEHEAQAYLNQAAQNLASSASNPNLSVEKRRYEYVVKMGPFASQERAAEAEAQARGMVRAVLTAG</sequence>
<organism>
    <name type="scientific">Neisseria meningitidis serogroup A / serotype 4A (strain DSM 15465 / Z2491)</name>
    <dbReference type="NCBI Taxonomy" id="122587"/>
    <lineage>
        <taxon>Bacteria</taxon>
        <taxon>Pseudomonadati</taxon>
        <taxon>Pseudomonadota</taxon>
        <taxon>Betaproteobacteria</taxon>
        <taxon>Neisseriales</taxon>
        <taxon>Neisseriaceae</taxon>
        <taxon>Neisseria</taxon>
    </lineage>
</organism>
<feature type="signal peptide" evidence="1">
    <location>
        <begin position="1"/>
        <end position="25"/>
    </location>
</feature>
<feature type="chain" id="PRO_0000030806" description="Endolytic peptidoglycan transglycosylase RlpA" evidence="1">
    <location>
        <begin position="26"/>
        <end position="239"/>
    </location>
</feature>
<feature type="domain" description="SPOR" evidence="1">
    <location>
        <begin position="160"/>
        <end position="239"/>
    </location>
</feature>
<dbReference type="EC" id="4.2.2.-" evidence="1"/>
<dbReference type="EMBL" id="AL157959">
    <property type="protein sequence ID" value="CAM09312.1"/>
    <property type="molecule type" value="Genomic_DNA"/>
</dbReference>
<dbReference type="PIR" id="F81795">
    <property type="entry name" value="F81795"/>
</dbReference>
<dbReference type="RefSeq" id="WP_002245836.1">
    <property type="nucleotide sequence ID" value="NC_003116.1"/>
</dbReference>
<dbReference type="SMR" id="Q9JSM7"/>
<dbReference type="EnsemblBacteria" id="CAM09312">
    <property type="protein sequence ID" value="CAM09312"/>
    <property type="gene ID" value="NMA2219"/>
</dbReference>
<dbReference type="KEGG" id="nma:NMA2219"/>
<dbReference type="HOGENOM" id="CLU_042923_3_4_4"/>
<dbReference type="Proteomes" id="UP000000626">
    <property type="component" value="Chromosome"/>
</dbReference>
<dbReference type="GO" id="GO:0008932">
    <property type="term" value="F:lytic endotransglycosylase activity"/>
    <property type="evidence" value="ECO:0007669"/>
    <property type="project" value="UniProtKB-UniRule"/>
</dbReference>
<dbReference type="GO" id="GO:0042834">
    <property type="term" value="F:peptidoglycan binding"/>
    <property type="evidence" value="ECO:0007669"/>
    <property type="project" value="InterPro"/>
</dbReference>
<dbReference type="GO" id="GO:0071555">
    <property type="term" value="P:cell wall organization"/>
    <property type="evidence" value="ECO:0007669"/>
    <property type="project" value="UniProtKB-KW"/>
</dbReference>
<dbReference type="GO" id="GO:0000270">
    <property type="term" value="P:peptidoglycan metabolic process"/>
    <property type="evidence" value="ECO:0007669"/>
    <property type="project" value="UniProtKB-UniRule"/>
</dbReference>
<dbReference type="CDD" id="cd22268">
    <property type="entry name" value="DPBB_RlpA-like"/>
    <property type="match status" value="1"/>
</dbReference>
<dbReference type="FunFam" id="2.40.40.10:FF:000003">
    <property type="entry name" value="Endolytic peptidoglycan transglycosylase RlpA"/>
    <property type="match status" value="1"/>
</dbReference>
<dbReference type="Gene3D" id="2.40.40.10">
    <property type="entry name" value="RlpA-like domain"/>
    <property type="match status" value="1"/>
</dbReference>
<dbReference type="HAMAP" id="MF_02071">
    <property type="entry name" value="RlpA"/>
    <property type="match status" value="1"/>
</dbReference>
<dbReference type="InterPro" id="IPR034718">
    <property type="entry name" value="RlpA"/>
</dbReference>
<dbReference type="InterPro" id="IPR009009">
    <property type="entry name" value="RlpA-like_DPBB"/>
</dbReference>
<dbReference type="InterPro" id="IPR036908">
    <property type="entry name" value="RlpA-like_sf"/>
</dbReference>
<dbReference type="InterPro" id="IPR012997">
    <property type="entry name" value="RplA"/>
</dbReference>
<dbReference type="InterPro" id="IPR007730">
    <property type="entry name" value="SPOR-like_dom"/>
</dbReference>
<dbReference type="NCBIfam" id="TIGR00413">
    <property type="entry name" value="rlpA"/>
    <property type="match status" value="1"/>
</dbReference>
<dbReference type="PANTHER" id="PTHR34183">
    <property type="entry name" value="ENDOLYTIC PEPTIDOGLYCAN TRANSGLYCOSYLASE RLPA"/>
    <property type="match status" value="1"/>
</dbReference>
<dbReference type="PANTHER" id="PTHR34183:SF1">
    <property type="entry name" value="ENDOLYTIC PEPTIDOGLYCAN TRANSGLYCOSYLASE RLPA"/>
    <property type="match status" value="1"/>
</dbReference>
<dbReference type="Pfam" id="PF03330">
    <property type="entry name" value="DPBB_1"/>
    <property type="match status" value="1"/>
</dbReference>
<dbReference type="Pfam" id="PF05036">
    <property type="entry name" value="SPOR"/>
    <property type="match status" value="1"/>
</dbReference>
<dbReference type="SUPFAM" id="SSF50685">
    <property type="entry name" value="Barwin-like endoglucanases"/>
    <property type="match status" value="1"/>
</dbReference>
<dbReference type="PROSITE" id="PS51724">
    <property type="entry name" value="SPOR"/>
    <property type="match status" value="1"/>
</dbReference>
<protein>
    <recommendedName>
        <fullName evidence="1">Endolytic peptidoglycan transglycosylase RlpA</fullName>
        <ecNumber evidence="1">4.2.2.-</ecNumber>
    </recommendedName>
</protein>
<name>RLPA_NEIMA</name>
<gene>
    <name evidence="1" type="primary">rlpA</name>
    <name type="ordered locus">NMA2219</name>
</gene>
<proteinExistence type="inferred from homology"/>
<keyword id="KW-0961">Cell wall biogenesis/degradation</keyword>
<keyword id="KW-0456">Lyase</keyword>
<keyword id="KW-0732">Signal</keyword>
<accession>Q9JSM7</accession>
<accession>A1IU42</accession>